<gene>
    <name evidence="1" type="primary">argS</name>
    <name type="ordered locus">MGAS2096_Spy1840</name>
</gene>
<organism>
    <name type="scientific">Streptococcus pyogenes serotype M12 (strain MGAS2096)</name>
    <dbReference type="NCBI Taxonomy" id="370553"/>
    <lineage>
        <taxon>Bacteria</taxon>
        <taxon>Bacillati</taxon>
        <taxon>Bacillota</taxon>
        <taxon>Bacilli</taxon>
        <taxon>Lactobacillales</taxon>
        <taxon>Streptococcaceae</taxon>
        <taxon>Streptococcus</taxon>
    </lineage>
</organism>
<name>SYR_STRPB</name>
<dbReference type="EC" id="6.1.1.19" evidence="1"/>
<dbReference type="EMBL" id="CP000261">
    <property type="protein sequence ID" value="ABF36892.1"/>
    <property type="molecule type" value="Genomic_DNA"/>
</dbReference>
<dbReference type="SMR" id="Q1J9B9"/>
<dbReference type="KEGG" id="spj:MGAS2096_Spy1840"/>
<dbReference type="HOGENOM" id="CLU_006406_6_1_9"/>
<dbReference type="GO" id="GO:0005737">
    <property type="term" value="C:cytoplasm"/>
    <property type="evidence" value="ECO:0007669"/>
    <property type="project" value="UniProtKB-SubCell"/>
</dbReference>
<dbReference type="GO" id="GO:0004814">
    <property type="term" value="F:arginine-tRNA ligase activity"/>
    <property type="evidence" value="ECO:0007669"/>
    <property type="project" value="UniProtKB-UniRule"/>
</dbReference>
<dbReference type="GO" id="GO:0005524">
    <property type="term" value="F:ATP binding"/>
    <property type="evidence" value="ECO:0007669"/>
    <property type="project" value="UniProtKB-UniRule"/>
</dbReference>
<dbReference type="GO" id="GO:0006420">
    <property type="term" value="P:arginyl-tRNA aminoacylation"/>
    <property type="evidence" value="ECO:0007669"/>
    <property type="project" value="UniProtKB-UniRule"/>
</dbReference>
<dbReference type="CDD" id="cd07956">
    <property type="entry name" value="Anticodon_Ia_Arg"/>
    <property type="match status" value="1"/>
</dbReference>
<dbReference type="CDD" id="cd00671">
    <property type="entry name" value="ArgRS_core"/>
    <property type="match status" value="1"/>
</dbReference>
<dbReference type="FunFam" id="3.40.50.620:FF:000116">
    <property type="entry name" value="Arginine--tRNA ligase"/>
    <property type="match status" value="1"/>
</dbReference>
<dbReference type="FunFam" id="1.10.730.10:FF:000006">
    <property type="entry name" value="Arginyl-tRNA synthetase 2, mitochondrial"/>
    <property type="match status" value="1"/>
</dbReference>
<dbReference type="Gene3D" id="3.30.1360.70">
    <property type="entry name" value="Arginyl tRNA synthetase N-terminal domain"/>
    <property type="match status" value="1"/>
</dbReference>
<dbReference type="Gene3D" id="3.40.50.620">
    <property type="entry name" value="HUPs"/>
    <property type="match status" value="1"/>
</dbReference>
<dbReference type="Gene3D" id="1.10.730.10">
    <property type="entry name" value="Isoleucyl-tRNA Synthetase, Domain 1"/>
    <property type="match status" value="1"/>
</dbReference>
<dbReference type="HAMAP" id="MF_00123">
    <property type="entry name" value="Arg_tRNA_synth"/>
    <property type="match status" value="1"/>
</dbReference>
<dbReference type="InterPro" id="IPR001278">
    <property type="entry name" value="Arg-tRNA-ligase"/>
</dbReference>
<dbReference type="InterPro" id="IPR005148">
    <property type="entry name" value="Arg-tRNA-synth_N"/>
</dbReference>
<dbReference type="InterPro" id="IPR036695">
    <property type="entry name" value="Arg-tRNA-synth_N_sf"/>
</dbReference>
<dbReference type="InterPro" id="IPR035684">
    <property type="entry name" value="ArgRS_core"/>
</dbReference>
<dbReference type="InterPro" id="IPR008909">
    <property type="entry name" value="DALR_anticod-bd"/>
</dbReference>
<dbReference type="InterPro" id="IPR014729">
    <property type="entry name" value="Rossmann-like_a/b/a_fold"/>
</dbReference>
<dbReference type="InterPro" id="IPR009080">
    <property type="entry name" value="tRNAsynth_Ia_anticodon-bd"/>
</dbReference>
<dbReference type="NCBIfam" id="TIGR00456">
    <property type="entry name" value="argS"/>
    <property type="match status" value="1"/>
</dbReference>
<dbReference type="PANTHER" id="PTHR11956:SF5">
    <property type="entry name" value="ARGININE--TRNA LIGASE, CYTOPLASMIC"/>
    <property type="match status" value="1"/>
</dbReference>
<dbReference type="PANTHER" id="PTHR11956">
    <property type="entry name" value="ARGINYL-TRNA SYNTHETASE"/>
    <property type="match status" value="1"/>
</dbReference>
<dbReference type="Pfam" id="PF03485">
    <property type="entry name" value="Arg_tRNA_synt_N"/>
    <property type="match status" value="1"/>
</dbReference>
<dbReference type="Pfam" id="PF05746">
    <property type="entry name" value="DALR_1"/>
    <property type="match status" value="1"/>
</dbReference>
<dbReference type="Pfam" id="PF00750">
    <property type="entry name" value="tRNA-synt_1d"/>
    <property type="match status" value="1"/>
</dbReference>
<dbReference type="PRINTS" id="PR01038">
    <property type="entry name" value="TRNASYNTHARG"/>
</dbReference>
<dbReference type="SMART" id="SM01016">
    <property type="entry name" value="Arg_tRNA_synt_N"/>
    <property type="match status" value="1"/>
</dbReference>
<dbReference type="SMART" id="SM00836">
    <property type="entry name" value="DALR_1"/>
    <property type="match status" value="1"/>
</dbReference>
<dbReference type="SUPFAM" id="SSF47323">
    <property type="entry name" value="Anticodon-binding domain of a subclass of class I aminoacyl-tRNA synthetases"/>
    <property type="match status" value="1"/>
</dbReference>
<dbReference type="SUPFAM" id="SSF55190">
    <property type="entry name" value="Arginyl-tRNA synthetase (ArgRS), N-terminal 'additional' domain"/>
    <property type="match status" value="1"/>
</dbReference>
<dbReference type="SUPFAM" id="SSF52374">
    <property type="entry name" value="Nucleotidylyl transferase"/>
    <property type="match status" value="1"/>
</dbReference>
<reference key="1">
    <citation type="journal article" date="2006" name="Proc. Natl. Acad. Sci. U.S.A.">
        <title>Molecular genetic anatomy of inter- and intraserotype variation in the human bacterial pathogen group A Streptococcus.</title>
        <authorList>
            <person name="Beres S.B."/>
            <person name="Richter E.W."/>
            <person name="Nagiec M.J."/>
            <person name="Sumby P."/>
            <person name="Porcella S.F."/>
            <person name="DeLeo F.R."/>
            <person name="Musser J.M."/>
        </authorList>
    </citation>
    <scope>NUCLEOTIDE SEQUENCE [LARGE SCALE GENOMIC DNA]</scope>
    <source>
        <strain>MGAS2096</strain>
    </source>
</reference>
<proteinExistence type="inferred from homology"/>
<protein>
    <recommendedName>
        <fullName evidence="1">Arginine--tRNA ligase</fullName>
        <ecNumber evidence="1">6.1.1.19</ecNumber>
    </recommendedName>
    <alternativeName>
        <fullName evidence="1">Arginyl-tRNA synthetase</fullName>
        <shortName evidence="1">ArgRS</shortName>
    </alternativeName>
</protein>
<sequence>MDTKTLIASEIAKVVPELEQDAIFNLLETPKNSDMGDLAFPAFSLAKVLRKAPQMIASELAEQIDESQFEKVVAVGPYINFFLDKAKISSQVLEQVITAGSDYAQQDEGQGRNVAIDMSSPNIAKPFSIGHLRSTVIGDSLAHIFAKMGYKPVKINHLGDWGKQFGMLIVAYKKWGDEAAVQAHPIDELLKLYVRINAEAETDPTVDEEAREWFRKLEDGDKEATELWQWFRDESLLEFNRLYDQLHVTFDSYNGEAFYNDKMDEVLDLLEAKNLLVESKGAQVVNLEKYGIEHPALIKKSDGATLYITRDLAAALYRKRTYDFAKSVYVVGNEQAAHFKQLKAVLKEMGYDWSDDMTHVAFGLVTKGGAKLSTRKGNVILLEPTVAEAINRAASQIEAKNPNLADKEAVAHAVGVGAIKFYDLKTDRMNGYDFDLEAMVSFEGETGPYVQYAHARIQSILRKADFTPSATTTYSLADAESWEIIKLIQDFPRIIKRTSDNFEPSIMAKFAINLAQSFNKYYAHTRILDDNSERDNRLALCYATATVLKEALRLLSVDAPNEM</sequence>
<comment type="catalytic activity">
    <reaction evidence="1">
        <text>tRNA(Arg) + L-arginine + ATP = L-arginyl-tRNA(Arg) + AMP + diphosphate</text>
        <dbReference type="Rhea" id="RHEA:20301"/>
        <dbReference type="Rhea" id="RHEA-COMP:9658"/>
        <dbReference type="Rhea" id="RHEA-COMP:9673"/>
        <dbReference type="ChEBI" id="CHEBI:30616"/>
        <dbReference type="ChEBI" id="CHEBI:32682"/>
        <dbReference type="ChEBI" id="CHEBI:33019"/>
        <dbReference type="ChEBI" id="CHEBI:78442"/>
        <dbReference type="ChEBI" id="CHEBI:78513"/>
        <dbReference type="ChEBI" id="CHEBI:456215"/>
        <dbReference type="EC" id="6.1.1.19"/>
    </reaction>
</comment>
<comment type="subunit">
    <text evidence="1">Monomer.</text>
</comment>
<comment type="subcellular location">
    <subcellularLocation>
        <location evidence="1">Cytoplasm</location>
    </subcellularLocation>
</comment>
<comment type="similarity">
    <text evidence="1">Belongs to the class-I aminoacyl-tRNA synthetase family.</text>
</comment>
<keyword id="KW-0030">Aminoacyl-tRNA synthetase</keyword>
<keyword id="KW-0067">ATP-binding</keyword>
<keyword id="KW-0963">Cytoplasm</keyword>
<keyword id="KW-0436">Ligase</keyword>
<keyword id="KW-0547">Nucleotide-binding</keyword>
<keyword id="KW-0648">Protein biosynthesis</keyword>
<evidence type="ECO:0000255" key="1">
    <source>
        <dbReference type="HAMAP-Rule" id="MF_00123"/>
    </source>
</evidence>
<feature type="chain" id="PRO_1000018128" description="Arginine--tRNA ligase">
    <location>
        <begin position="1"/>
        <end position="563"/>
    </location>
</feature>
<feature type="short sequence motif" description="'HIGH' region">
    <location>
        <begin position="121"/>
        <end position="131"/>
    </location>
</feature>
<accession>Q1J9B9</accession>